<comment type="function">
    <text evidence="1">Binds to the 23S rRNA.</text>
</comment>
<comment type="similarity">
    <text evidence="1">Belongs to the bacterial ribosomal protein bL9 family.</text>
</comment>
<organism>
    <name type="scientific">Clostridium perfringens (strain 13 / Type A)</name>
    <dbReference type="NCBI Taxonomy" id="195102"/>
    <lineage>
        <taxon>Bacteria</taxon>
        <taxon>Bacillati</taxon>
        <taxon>Bacillota</taxon>
        <taxon>Clostridia</taxon>
        <taxon>Eubacteriales</taxon>
        <taxon>Clostridiaceae</taxon>
        <taxon>Clostridium</taxon>
    </lineage>
</organism>
<reference key="1">
    <citation type="journal article" date="2002" name="Proc. Natl. Acad. Sci. U.S.A.">
        <title>Complete genome sequence of Clostridium perfringens, an anaerobic flesh-eater.</title>
        <authorList>
            <person name="Shimizu T."/>
            <person name="Ohtani K."/>
            <person name="Hirakawa H."/>
            <person name="Ohshima K."/>
            <person name="Yamashita A."/>
            <person name="Shiba T."/>
            <person name="Ogasawara N."/>
            <person name="Hattori M."/>
            <person name="Kuhara S."/>
            <person name="Hayashi H."/>
        </authorList>
    </citation>
    <scope>NUCLEOTIDE SEQUENCE [LARGE SCALE GENOMIC DNA]</scope>
    <source>
        <strain>13 / Type A</strain>
    </source>
</reference>
<protein>
    <recommendedName>
        <fullName evidence="1">Large ribosomal subunit protein bL9</fullName>
    </recommendedName>
    <alternativeName>
        <fullName evidence="2">50S ribosomal protein L9</fullName>
    </alternativeName>
</protein>
<proteinExistence type="inferred from homology"/>
<evidence type="ECO:0000255" key="1">
    <source>
        <dbReference type="HAMAP-Rule" id="MF_00503"/>
    </source>
</evidence>
<evidence type="ECO:0000305" key="2"/>
<gene>
    <name evidence="1" type="primary">rplI</name>
    <name type="ordered locus">CPE2636</name>
</gene>
<keyword id="KW-1185">Reference proteome</keyword>
<keyword id="KW-0687">Ribonucleoprotein</keyword>
<keyword id="KW-0689">Ribosomal protein</keyword>
<keyword id="KW-0694">RNA-binding</keyword>
<keyword id="KW-0699">rRNA-binding</keyword>
<sequence>MKVILLQDVKKLGKKGDVINASDGYARNFLFPKKLAQEATDNNLHILNNKKENERRQKLAELEAAQALAADLKDKVIKIDGKAGDNGKLFGAITSKDVAGLIKKQFNVEVDKKKIVMDTIKIAGTYNIEVKLYPEVSTKMKVMVVPVQ</sequence>
<name>RL9_CLOPE</name>
<dbReference type="EMBL" id="BA000016">
    <property type="protein sequence ID" value="BAB82342.1"/>
    <property type="molecule type" value="Genomic_DNA"/>
</dbReference>
<dbReference type="RefSeq" id="WP_003451030.1">
    <property type="nucleotide sequence ID" value="NC_003366.1"/>
</dbReference>
<dbReference type="SMR" id="Q8XH49"/>
<dbReference type="STRING" id="195102.gene:10491980"/>
<dbReference type="GeneID" id="93000749"/>
<dbReference type="KEGG" id="cpe:CPE2636"/>
<dbReference type="HOGENOM" id="CLU_078938_3_0_9"/>
<dbReference type="Proteomes" id="UP000000818">
    <property type="component" value="Chromosome"/>
</dbReference>
<dbReference type="GO" id="GO:1990904">
    <property type="term" value="C:ribonucleoprotein complex"/>
    <property type="evidence" value="ECO:0007669"/>
    <property type="project" value="UniProtKB-KW"/>
</dbReference>
<dbReference type="GO" id="GO:0005840">
    <property type="term" value="C:ribosome"/>
    <property type="evidence" value="ECO:0007669"/>
    <property type="project" value="UniProtKB-KW"/>
</dbReference>
<dbReference type="GO" id="GO:0019843">
    <property type="term" value="F:rRNA binding"/>
    <property type="evidence" value="ECO:0007669"/>
    <property type="project" value="UniProtKB-UniRule"/>
</dbReference>
<dbReference type="GO" id="GO:0003735">
    <property type="term" value="F:structural constituent of ribosome"/>
    <property type="evidence" value="ECO:0007669"/>
    <property type="project" value="InterPro"/>
</dbReference>
<dbReference type="GO" id="GO:0006412">
    <property type="term" value="P:translation"/>
    <property type="evidence" value="ECO:0007669"/>
    <property type="project" value="UniProtKB-UniRule"/>
</dbReference>
<dbReference type="FunFam" id="3.40.5.10:FF:000002">
    <property type="entry name" value="50S ribosomal protein L9"/>
    <property type="match status" value="1"/>
</dbReference>
<dbReference type="Gene3D" id="3.10.430.100">
    <property type="entry name" value="Ribosomal protein L9, C-terminal domain"/>
    <property type="match status" value="1"/>
</dbReference>
<dbReference type="Gene3D" id="3.40.5.10">
    <property type="entry name" value="Ribosomal protein L9, N-terminal domain"/>
    <property type="match status" value="1"/>
</dbReference>
<dbReference type="HAMAP" id="MF_00503">
    <property type="entry name" value="Ribosomal_bL9"/>
    <property type="match status" value="1"/>
</dbReference>
<dbReference type="InterPro" id="IPR000244">
    <property type="entry name" value="Ribosomal_bL9"/>
</dbReference>
<dbReference type="InterPro" id="IPR009027">
    <property type="entry name" value="Ribosomal_bL9/RNase_H1_N"/>
</dbReference>
<dbReference type="InterPro" id="IPR020594">
    <property type="entry name" value="Ribosomal_bL9_bac/chp"/>
</dbReference>
<dbReference type="InterPro" id="IPR020069">
    <property type="entry name" value="Ribosomal_bL9_C"/>
</dbReference>
<dbReference type="InterPro" id="IPR036791">
    <property type="entry name" value="Ribosomal_bL9_C_sf"/>
</dbReference>
<dbReference type="InterPro" id="IPR020070">
    <property type="entry name" value="Ribosomal_bL9_N"/>
</dbReference>
<dbReference type="InterPro" id="IPR036935">
    <property type="entry name" value="Ribosomal_bL9_N_sf"/>
</dbReference>
<dbReference type="NCBIfam" id="TIGR00158">
    <property type="entry name" value="L9"/>
    <property type="match status" value="1"/>
</dbReference>
<dbReference type="PANTHER" id="PTHR21368">
    <property type="entry name" value="50S RIBOSOMAL PROTEIN L9"/>
    <property type="match status" value="1"/>
</dbReference>
<dbReference type="Pfam" id="PF03948">
    <property type="entry name" value="Ribosomal_L9_C"/>
    <property type="match status" value="1"/>
</dbReference>
<dbReference type="Pfam" id="PF01281">
    <property type="entry name" value="Ribosomal_L9_N"/>
    <property type="match status" value="1"/>
</dbReference>
<dbReference type="SUPFAM" id="SSF55658">
    <property type="entry name" value="L9 N-domain-like"/>
    <property type="match status" value="1"/>
</dbReference>
<dbReference type="SUPFAM" id="SSF55653">
    <property type="entry name" value="Ribosomal protein L9 C-domain"/>
    <property type="match status" value="1"/>
</dbReference>
<dbReference type="PROSITE" id="PS00651">
    <property type="entry name" value="RIBOSOMAL_L9"/>
    <property type="match status" value="1"/>
</dbReference>
<accession>Q8XH49</accession>
<feature type="chain" id="PRO_0000176633" description="Large ribosomal subunit protein bL9">
    <location>
        <begin position="1"/>
        <end position="148"/>
    </location>
</feature>